<comment type="function">
    <text evidence="2 3">In muscle, parvalbumin is thought to be involved in relaxation after contraction. It binds two calcium ions (By similarity).</text>
</comment>
<comment type="mass spectrometry" mass="11329.748" error="0.006" method="Electrospray" evidence="6"/>
<comment type="miscellaneous">
    <text evidence="2 6">Is regarded as an important allergen.</text>
</comment>
<comment type="miscellaneous">
    <text evidence="6">On the 2D-gel the determined pI of this protein is: 4.57, its MW is: 11.30 kDa.</text>
</comment>
<comment type="similarity">
    <text evidence="4">Belongs to the parvalbumin family.</text>
</comment>
<organism>
    <name type="scientific">Merluccius hubbsi</name>
    <name type="common">Argentine hake</name>
    <name type="synonym">Merluccius gayi</name>
    <dbReference type="NCBI Taxonomy" id="89949"/>
    <lineage>
        <taxon>Eukaryota</taxon>
        <taxon>Metazoa</taxon>
        <taxon>Chordata</taxon>
        <taxon>Craniata</taxon>
        <taxon>Vertebrata</taxon>
        <taxon>Euteleostomi</taxon>
        <taxon>Actinopterygii</taxon>
        <taxon>Neopterygii</taxon>
        <taxon>Teleostei</taxon>
        <taxon>Neoteleostei</taxon>
        <taxon>Acanthomorphata</taxon>
        <taxon>Zeiogadaria</taxon>
        <taxon>Gadariae</taxon>
        <taxon>Gadiformes</taxon>
        <taxon>Gadoidei</taxon>
        <taxon>Merlucciidae</taxon>
        <taxon>Merluccius</taxon>
    </lineage>
</organism>
<proteinExistence type="evidence at protein level"/>
<sequence length="108" mass="11295">AFAGILADADITAALAACKAEGTFKHGEFFTKIGLKGKSAADIKKVFGIIDQDKSDFVEEDELKLFLQNFSAGARALTDAETATFLKAGDSDGDGKIGVDEFAAMVKG</sequence>
<dbReference type="SMR" id="P86764"/>
<dbReference type="Allergome" id="7644">
    <property type="allergen name" value="Mer hu 1"/>
</dbReference>
<dbReference type="iPTMnet" id="P86764"/>
<dbReference type="GO" id="GO:0005737">
    <property type="term" value="C:cytoplasm"/>
    <property type="evidence" value="ECO:0007669"/>
    <property type="project" value="TreeGrafter"/>
</dbReference>
<dbReference type="GO" id="GO:0005509">
    <property type="term" value="F:calcium ion binding"/>
    <property type="evidence" value="ECO:0007669"/>
    <property type="project" value="InterPro"/>
</dbReference>
<dbReference type="CDD" id="cd16255">
    <property type="entry name" value="EFh_parvalbumin_beta"/>
    <property type="match status" value="1"/>
</dbReference>
<dbReference type="FunFam" id="1.10.238.10:FF:000060">
    <property type="entry name" value="Parvalbumin, thymic"/>
    <property type="match status" value="1"/>
</dbReference>
<dbReference type="Gene3D" id="1.10.238.10">
    <property type="entry name" value="EF-hand"/>
    <property type="match status" value="1"/>
</dbReference>
<dbReference type="InterPro" id="IPR011992">
    <property type="entry name" value="EF-hand-dom_pair"/>
</dbReference>
<dbReference type="InterPro" id="IPR018247">
    <property type="entry name" value="EF_Hand_1_Ca_BS"/>
</dbReference>
<dbReference type="InterPro" id="IPR002048">
    <property type="entry name" value="EF_hand_dom"/>
</dbReference>
<dbReference type="InterPro" id="IPR008080">
    <property type="entry name" value="Parvalbumin"/>
</dbReference>
<dbReference type="PANTHER" id="PTHR11653:SF12">
    <property type="entry name" value="PARVALBUMIN"/>
    <property type="match status" value="1"/>
</dbReference>
<dbReference type="PANTHER" id="PTHR11653">
    <property type="entry name" value="PARVALBUMIN ALPHA"/>
    <property type="match status" value="1"/>
</dbReference>
<dbReference type="Pfam" id="PF13499">
    <property type="entry name" value="EF-hand_7"/>
    <property type="match status" value="1"/>
</dbReference>
<dbReference type="PRINTS" id="PR01697">
    <property type="entry name" value="PARVALBUMIN"/>
</dbReference>
<dbReference type="SUPFAM" id="SSF47473">
    <property type="entry name" value="EF-hand"/>
    <property type="match status" value="1"/>
</dbReference>
<dbReference type="PROSITE" id="PS00018">
    <property type="entry name" value="EF_HAND_1"/>
    <property type="match status" value="2"/>
</dbReference>
<dbReference type="PROSITE" id="PS50222">
    <property type="entry name" value="EF_HAND_2"/>
    <property type="match status" value="2"/>
</dbReference>
<evidence type="ECO:0000250" key="1">
    <source>
        <dbReference type="UniProtKB" id="P02621"/>
    </source>
</evidence>
<evidence type="ECO:0000250" key="2">
    <source>
        <dbReference type="UniProtKB" id="P02622"/>
    </source>
</evidence>
<evidence type="ECO:0000250" key="3">
    <source>
        <dbReference type="UniProtKB" id="P02624"/>
    </source>
</evidence>
<evidence type="ECO:0000255" key="4"/>
<evidence type="ECO:0000255" key="5">
    <source>
        <dbReference type="PROSITE-ProRule" id="PRU00448"/>
    </source>
</evidence>
<evidence type="ECO:0000269" key="6">
    <source>
    </source>
</evidence>
<evidence type="ECO:0000303" key="7">
    <source>
    </source>
</evidence>
<evidence type="ECO:0000305" key="8"/>
<name>PRVB1_MERHU</name>
<keyword id="KW-0007">Acetylation</keyword>
<keyword id="KW-0020">Allergen</keyword>
<keyword id="KW-0106">Calcium</keyword>
<keyword id="KW-0903">Direct protein sequencing</keyword>
<keyword id="KW-0479">Metal-binding</keyword>
<keyword id="KW-0514">Muscle protein</keyword>
<keyword id="KW-0677">Repeat</keyword>
<accession>P86764</accession>
<feature type="chain" id="PRO_0000399422" description="Parvalbumin beta 1">
    <location>
        <begin position="1"/>
        <end position="108"/>
    </location>
</feature>
<feature type="domain" description="EF-hand 1" evidence="5">
    <location>
        <begin position="38"/>
        <end position="73"/>
    </location>
</feature>
<feature type="domain" description="EF-hand 2" evidence="5">
    <location>
        <begin position="77"/>
        <end position="108"/>
    </location>
</feature>
<feature type="binding site" evidence="1 5">
    <location>
        <position position="51"/>
    </location>
    <ligand>
        <name>Ca(2+)</name>
        <dbReference type="ChEBI" id="CHEBI:29108"/>
        <label>1</label>
    </ligand>
</feature>
<feature type="binding site" evidence="1 5">
    <location>
        <position position="53"/>
    </location>
    <ligand>
        <name>Ca(2+)</name>
        <dbReference type="ChEBI" id="CHEBI:29108"/>
        <label>1</label>
    </ligand>
</feature>
<feature type="binding site" evidence="1 5">
    <location>
        <position position="55"/>
    </location>
    <ligand>
        <name>Ca(2+)</name>
        <dbReference type="ChEBI" id="CHEBI:29108"/>
        <label>1</label>
    </ligand>
</feature>
<feature type="binding site" evidence="1">
    <location>
        <position position="57"/>
    </location>
    <ligand>
        <name>Ca(2+)</name>
        <dbReference type="ChEBI" id="CHEBI:29108"/>
        <label>1</label>
    </ligand>
</feature>
<feature type="binding site" evidence="1">
    <location>
        <position position="59"/>
    </location>
    <ligand>
        <name>Ca(2+)</name>
        <dbReference type="ChEBI" id="CHEBI:29108"/>
        <label>1</label>
    </ligand>
</feature>
<feature type="binding site" evidence="1 5">
    <location>
        <position position="62"/>
    </location>
    <ligand>
        <name>Ca(2+)</name>
        <dbReference type="ChEBI" id="CHEBI:29108"/>
        <label>1</label>
    </ligand>
</feature>
<feature type="binding site" evidence="1 5">
    <location>
        <position position="90"/>
    </location>
    <ligand>
        <name>Ca(2+)</name>
        <dbReference type="ChEBI" id="CHEBI:29108"/>
        <label>2</label>
    </ligand>
</feature>
<feature type="binding site" evidence="1 5">
    <location>
        <position position="92"/>
    </location>
    <ligand>
        <name>Ca(2+)</name>
        <dbReference type="ChEBI" id="CHEBI:29108"/>
        <label>2</label>
    </ligand>
</feature>
<feature type="binding site" evidence="1 5">
    <location>
        <position position="94"/>
    </location>
    <ligand>
        <name>Ca(2+)</name>
        <dbReference type="ChEBI" id="CHEBI:29108"/>
        <label>2</label>
    </ligand>
</feature>
<feature type="binding site" evidence="5">
    <location>
        <position position="96"/>
    </location>
    <ligand>
        <name>Ca(2+)</name>
        <dbReference type="ChEBI" id="CHEBI:29108"/>
        <label>2</label>
    </ligand>
</feature>
<feature type="binding site" evidence="1 5">
    <location>
        <position position="101"/>
    </location>
    <ligand>
        <name>Ca(2+)</name>
        <dbReference type="ChEBI" id="CHEBI:29108"/>
        <label>2</label>
    </ligand>
</feature>
<feature type="modified residue" description="N-acetylalanine" evidence="6">
    <location>
        <position position="1"/>
    </location>
</feature>
<feature type="unsure residue" description="I or L" evidence="6">
    <location>
        <position position="5"/>
    </location>
</feature>
<feature type="unsure residue" description="L or I" evidence="6">
    <location>
        <position position="6"/>
    </location>
</feature>
<feature type="unsure residue" description="I or L" evidence="6">
    <location>
        <position position="11"/>
    </location>
</feature>
<feature type="unsure residue" description="L or I" evidence="6">
    <location>
        <position position="15"/>
    </location>
</feature>
<feature type="unsure residue" description="K or Q" evidence="6">
    <location>
        <position position="19"/>
    </location>
</feature>
<feature type="unsure residue" description="K or Q" evidence="6">
    <location>
        <position position="25"/>
    </location>
</feature>
<feature type="unsure residue" description="K or Q" evidence="6">
    <location>
        <position position="32"/>
    </location>
</feature>
<feature type="unsure residue" description="I or L" evidence="6">
    <location>
        <position position="33"/>
    </location>
</feature>
<feature type="unsure residue" description="L or I" evidence="6">
    <location>
        <position position="35"/>
    </location>
</feature>
<feature type="unsure residue" description="K or Q" evidence="6">
    <location>
        <position position="36"/>
    </location>
</feature>
<feature type="unsure residue" description="K or Q" evidence="6">
    <location>
        <position position="38"/>
    </location>
</feature>
<feature type="unsure residue" description="I or L" evidence="6">
    <location>
        <position position="43"/>
    </location>
</feature>
<feature type="unsure residue" description="K or Q" evidence="6">
    <location>
        <position position="44"/>
    </location>
</feature>
<feature type="unsure residue" description="K or Q" evidence="6">
    <location>
        <position position="45"/>
    </location>
</feature>
<feature type="unsure residue" description="I or L" evidence="6">
    <location>
        <position position="49"/>
    </location>
</feature>
<feature type="unsure residue" description="I or L" evidence="6">
    <location>
        <position position="50"/>
    </location>
</feature>
<feature type="unsure residue" description="Q or K" evidence="6">
    <location>
        <position position="52"/>
    </location>
</feature>
<feature type="unsure residue" description="K or Q" evidence="6">
    <location>
        <position position="54"/>
    </location>
</feature>
<feature type="unsure residue" description="L or I" evidence="6">
    <location>
        <position position="63"/>
    </location>
</feature>
<feature type="unsure residue" description="K or Q" evidence="6">
    <location>
        <position position="64"/>
    </location>
</feature>
<feature type="unsure residue" description="L or I" evidence="6">
    <location>
        <position position="65"/>
    </location>
</feature>
<feature type="unsure residue" description="L or I" evidence="6">
    <location>
        <position position="67"/>
    </location>
</feature>
<feature type="unsure residue" description="Q or K" evidence="6">
    <location>
        <position position="68"/>
    </location>
</feature>
<feature type="unsure residue" description="L or I" evidence="6">
    <location>
        <position position="77"/>
    </location>
</feature>
<feature type="unsure residue" description="L or I" evidence="6">
    <location>
        <position position="86"/>
    </location>
</feature>
<feature type="unsure residue" description="K or Q" evidence="6">
    <location>
        <position position="87"/>
    </location>
</feature>
<feature type="unsure residue" description="K or Q" evidence="6">
    <location>
        <position position="96"/>
    </location>
</feature>
<feature type="unsure residue" description="I or L" evidence="6">
    <location>
        <position position="97"/>
    </location>
</feature>
<feature type="unsure residue" description="K or Q" evidence="6">
    <location>
        <position position="107"/>
    </location>
</feature>
<reference evidence="8" key="1">
    <citation type="journal article" date="2010" name="J. Proteome Res.">
        <title>Extensive de novo sequencing of new parvalbumin isoforms using a novel combination of bottom-up proteomics, accurate molecular mass measurement by FTICR-MS, and selected MS/MS ion monitoring.</title>
        <authorList>
            <person name="Carrera M."/>
            <person name="Canas B."/>
            <person name="Vazquez J."/>
            <person name="Gallardo J.M."/>
        </authorList>
    </citation>
    <scope>PROTEIN SEQUENCE</scope>
    <scope>MASS SPECTROMETRY</scope>
    <scope>ACETYLATION AT ALA-1</scope>
    <source>
        <tissue evidence="6">Muscle</tissue>
    </source>
</reference>
<protein>
    <recommendedName>
        <fullName evidence="7">Parvalbumin beta 1</fullName>
    </recommendedName>
</protein>